<name>SAHH_CHLL3</name>
<proteinExistence type="inferred from homology"/>
<comment type="function">
    <text evidence="1">May play a key role in the regulation of the intracellular concentration of adenosylhomocysteine.</text>
</comment>
<comment type="catalytic activity">
    <reaction evidence="1">
        <text>S-adenosyl-L-homocysteine + H2O = L-homocysteine + adenosine</text>
        <dbReference type="Rhea" id="RHEA:21708"/>
        <dbReference type="ChEBI" id="CHEBI:15377"/>
        <dbReference type="ChEBI" id="CHEBI:16335"/>
        <dbReference type="ChEBI" id="CHEBI:57856"/>
        <dbReference type="ChEBI" id="CHEBI:58199"/>
        <dbReference type="EC" id="3.13.2.1"/>
    </reaction>
</comment>
<comment type="cofactor">
    <cofactor evidence="1">
        <name>NAD(+)</name>
        <dbReference type="ChEBI" id="CHEBI:57540"/>
    </cofactor>
    <text evidence="1">Binds 1 NAD(+) per subunit.</text>
</comment>
<comment type="pathway">
    <text evidence="1">Amino-acid biosynthesis; L-homocysteine biosynthesis; L-homocysteine from S-adenosyl-L-homocysteine: step 1/1.</text>
</comment>
<comment type="subcellular location">
    <subcellularLocation>
        <location evidence="1">Cytoplasm</location>
    </subcellularLocation>
</comment>
<comment type="similarity">
    <text evidence="1">Belongs to the adenosylhomocysteinase family.</text>
</comment>
<sequence>MTIEATALAYKVADISLAEWGRKEIDIAEKEMPGLMAIRKKYAGQKPLKGARVAGSLHMTIQTAVLIETLVDLGADVRWASCNIFSTQDHAAAAIAATGVPVFAWKGETLEDYWWCTRQILDFGDGQGPNLIVDDGGDATLMIILGYKIENNPSMLQNAGGNAEERALFGQLKAIYEEDSNRWHKVAKEMKGVSEETTTGVHRLYQMMEKGELLFPAINVNDSVTKSKFDNLYGCRESLADGIKRATDVMIAGKVAVVLGYGDVGKGCAHSMRSYGARVIVTEIDPICALQAAMEGFEVTTMDKAVKEGNIFVTTTGNKDVVTLEHMKQMPDEAIVCNIGHFDNEIQVEPLNEYKGATKLNIKPQVDKYTFEDGHCIYLLAEGRLVNLGCATGHPSFVMSNSFTNQTLAQIELWKNDYKVDVYRLPKALDEEVARLHLEQIGVKLTTLSKEQAEYIGVPVTGPYKPEHYRY</sequence>
<feature type="chain" id="PRO_1000024743" description="Adenosylhomocysteinase">
    <location>
        <begin position="1"/>
        <end position="471"/>
    </location>
</feature>
<feature type="binding site" evidence="1">
    <location>
        <position position="60"/>
    </location>
    <ligand>
        <name>substrate</name>
    </ligand>
</feature>
<feature type="binding site" evidence="1">
    <location>
        <position position="135"/>
    </location>
    <ligand>
        <name>substrate</name>
    </ligand>
</feature>
<feature type="binding site" evidence="1">
    <location>
        <position position="196"/>
    </location>
    <ligand>
        <name>substrate</name>
    </ligand>
</feature>
<feature type="binding site" evidence="1">
    <location>
        <begin position="197"/>
        <end position="199"/>
    </location>
    <ligand>
        <name>NAD(+)</name>
        <dbReference type="ChEBI" id="CHEBI:57540"/>
    </ligand>
</feature>
<feature type="binding site" evidence="1">
    <location>
        <position position="226"/>
    </location>
    <ligand>
        <name>substrate</name>
    </ligand>
</feature>
<feature type="binding site" evidence="1">
    <location>
        <position position="230"/>
    </location>
    <ligand>
        <name>substrate</name>
    </ligand>
</feature>
<feature type="binding site" evidence="1">
    <location>
        <position position="231"/>
    </location>
    <ligand>
        <name>NAD(+)</name>
        <dbReference type="ChEBI" id="CHEBI:57540"/>
    </ligand>
</feature>
<feature type="binding site" evidence="1">
    <location>
        <begin position="260"/>
        <end position="265"/>
    </location>
    <ligand>
        <name>NAD(+)</name>
        <dbReference type="ChEBI" id="CHEBI:57540"/>
    </ligand>
</feature>
<feature type="binding site" evidence="1">
    <location>
        <position position="283"/>
    </location>
    <ligand>
        <name>NAD(+)</name>
        <dbReference type="ChEBI" id="CHEBI:57540"/>
    </ligand>
</feature>
<feature type="binding site" evidence="1">
    <location>
        <position position="318"/>
    </location>
    <ligand>
        <name>NAD(+)</name>
        <dbReference type="ChEBI" id="CHEBI:57540"/>
    </ligand>
</feature>
<feature type="binding site" evidence="1">
    <location>
        <begin position="339"/>
        <end position="341"/>
    </location>
    <ligand>
        <name>NAD(+)</name>
        <dbReference type="ChEBI" id="CHEBI:57540"/>
    </ligand>
</feature>
<feature type="binding site" evidence="1">
    <location>
        <position position="387"/>
    </location>
    <ligand>
        <name>NAD(+)</name>
        <dbReference type="ChEBI" id="CHEBI:57540"/>
    </ligand>
</feature>
<dbReference type="EC" id="3.13.2.1" evidence="1"/>
<dbReference type="EMBL" id="CP000096">
    <property type="protein sequence ID" value="ABB23549.1"/>
    <property type="molecule type" value="Genomic_DNA"/>
</dbReference>
<dbReference type="RefSeq" id="WP_011357424.1">
    <property type="nucleotide sequence ID" value="NC_007512.1"/>
</dbReference>
<dbReference type="SMR" id="Q3B532"/>
<dbReference type="STRING" id="319225.Plut_0671"/>
<dbReference type="KEGG" id="plt:Plut_0671"/>
<dbReference type="eggNOG" id="COG0499">
    <property type="taxonomic scope" value="Bacteria"/>
</dbReference>
<dbReference type="HOGENOM" id="CLU_025194_2_1_10"/>
<dbReference type="OrthoDB" id="9802717at2"/>
<dbReference type="UniPathway" id="UPA00314">
    <property type="reaction ID" value="UER00076"/>
</dbReference>
<dbReference type="Proteomes" id="UP000002709">
    <property type="component" value="Chromosome"/>
</dbReference>
<dbReference type="GO" id="GO:0005829">
    <property type="term" value="C:cytosol"/>
    <property type="evidence" value="ECO:0007669"/>
    <property type="project" value="TreeGrafter"/>
</dbReference>
<dbReference type="GO" id="GO:0004013">
    <property type="term" value="F:adenosylhomocysteinase activity"/>
    <property type="evidence" value="ECO:0007669"/>
    <property type="project" value="UniProtKB-UniRule"/>
</dbReference>
<dbReference type="GO" id="GO:0071269">
    <property type="term" value="P:L-homocysteine biosynthetic process"/>
    <property type="evidence" value="ECO:0007669"/>
    <property type="project" value="UniProtKB-UniRule"/>
</dbReference>
<dbReference type="GO" id="GO:0006730">
    <property type="term" value="P:one-carbon metabolic process"/>
    <property type="evidence" value="ECO:0007669"/>
    <property type="project" value="UniProtKB-KW"/>
</dbReference>
<dbReference type="GO" id="GO:0033353">
    <property type="term" value="P:S-adenosylmethionine cycle"/>
    <property type="evidence" value="ECO:0007669"/>
    <property type="project" value="TreeGrafter"/>
</dbReference>
<dbReference type="CDD" id="cd00401">
    <property type="entry name" value="SAHH"/>
    <property type="match status" value="1"/>
</dbReference>
<dbReference type="FunFam" id="3.40.50.720:FF:000004">
    <property type="entry name" value="Adenosylhomocysteinase"/>
    <property type="match status" value="1"/>
</dbReference>
<dbReference type="Gene3D" id="3.40.50.1480">
    <property type="entry name" value="Adenosylhomocysteinase-like"/>
    <property type="match status" value="1"/>
</dbReference>
<dbReference type="Gene3D" id="3.40.50.720">
    <property type="entry name" value="NAD(P)-binding Rossmann-like Domain"/>
    <property type="match status" value="1"/>
</dbReference>
<dbReference type="HAMAP" id="MF_00563">
    <property type="entry name" value="AdoHcyase"/>
    <property type="match status" value="1"/>
</dbReference>
<dbReference type="InterPro" id="IPR042172">
    <property type="entry name" value="Adenosylhomocyst_ase-like_sf"/>
</dbReference>
<dbReference type="InterPro" id="IPR000043">
    <property type="entry name" value="Adenosylhomocysteinase-like"/>
</dbReference>
<dbReference type="InterPro" id="IPR015878">
    <property type="entry name" value="Ado_hCys_hydrolase_NAD-bd"/>
</dbReference>
<dbReference type="InterPro" id="IPR036291">
    <property type="entry name" value="NAD(P)-bd_dom_sf"/>
</dbReference>
<dbReference type="InterPro" id="IPR020082">
    <property type="entry name" value="S-Ado-L-homoCys_hydrolase_CS"/>
</dbReference>
<dbReference type="NCBIfam" id="TIGR00936">
    <property type="entry name" value="ahcY"/>
    <property type="match status" value="1"/>
</dbReference>
<dbReference type="NCBIfam" id="NF004005">
    <property type="entry name" value="PRK05476.2-3"/>
    <property type="match status" value="1"/>
</dbReference>
<dbReference type="PANTHER" id="PTHR23420">
    <property type="entry name" value="ADENOSYLHOMOCYSTEINASE"/>
    <property type="match status" value="1"/>
</dbReference>
<dbReference type="PANTHER" id="PTHR23420:SF0">
    <property type="entry name" value="ADENOSYLHOMOCYSTEINASE"/>
    <property type="match status" value="1"/>
</dbReference>
<dbReference type="Pfam" id="PF05221">
    <property type="entry name" value="AdoHcyase"/>
    <property type="match status" value="1"/>
</dbReference>
<dbReference type="Pfam" id="PF00670">
    <property type="entry name" value="AdoHcyase_NAD"/>
    <property type="match status" value="1"/>
</dbReference>
<dbReference type="PIRSF" id="PIRSF001109">
    <property type="entry name" value="Ad_hcy_hydrolase"/>
    <property type="match status" value="1"/>
</dbReference>
<dbReference type="SMART" id="SM00996">
    <property type="entry name" value="AdoHcyase"/>
    <property type="match status" value="1"/>
</dbReference>
<dbReference type="SMART" id="SM00997">
    <property type="entry name" value="AdoHcyase_NAD"/>
    <property type="match status" value="1"/>
</dbReference>
<dbReference type="SUPFAM" id="SSF52283">
    <property type="entry name" value="Formate/glycerate dehydrogenase catalytic domain-like"/>
    <property type="match status" value="1"/>
</dbReference>
<dbReference type="SUPFAM" id="SSF51735">
    <property type="entry name" value="NAD(P)-binding Rossmann-fold domains"/>
    <property type="match status" value="1"/>
</dbReference>
<dbReference type="PROSITE" id="PS00738">
    <property type="entry name" value="ADOHCYASE_1"/>
    <property type="match status" value="1"/>
</dbReference>
<dbReference type="PROSITE" id="PS00739">
    <property type="entry name" value="ADOHCYASE_2"/>
    <property type="match status" value="1"/>
</dbReference>
<evidence type="ECO:0000255" key="1">
    <source>
        <dbReference type="HAMAP-Rule" id="MF_00563"/>
    </source>
</evidence>
<accession>Q3B532</accession>
<protein>
    <recommendedName>
        <fullName evidence="1">Adenosylhomocysteinase</fullName>
        <ecNumber evidence="1">3.13.2.1</ecNumber>
    </recommendedName>
    <alternativeName>
        <fullName evidence="1">S-adenosyl-L-homocysteine hydrolase</fullName>
        <shortName evidence="1">AdoHcyase</shortName>
    </alternativeName>
</protein>
<organism>
    <name type="scientific">Chlorobium luteolum (strain DSM 273 / BCRC 81028 / 2530)</name>
    <name type="common">Pelodictyon luteolum</name>
    <dbReference type="NCBI Taxonomy" id="319225"/>
    <lineage>
        <taxon>Bacteria</taxon>
        <taxon>Pseudomonadati</taxon>
        <taxon>Chlorobiota</taxon>
        <taxon>Chlorobiia</taxon>
        <taxon>Chlorobiales</taxon>
        <taxon>Chlorobiaceae</taxon>
        <taxon>Chlorobium/Pelodictyon group</taxon>
        <taxon>Pelodictyon</taxon>
    </lineage>
</organism>
<gene>
    <name evidence="1" type="primary">ahcY</name>
    <name type="ordered locus">Plut_0671</name>
</gene>
<reference key="1">
    <citation type="submission" date="2005-08" db="EMBL/GenBank/DDBJ databases">
        <title>Complete sequence of Pelodictyon luteolum DSM 273.</title>
        <authorList>
            <consortium name="US DOE Joint Genome Institute"/>
            <person name="Copeland A."/>
            <person name="Lucas S."/>
            <person name="Lapidus A."/>
            <person name="Barry K."/>
            <person name="Detter J.C."/>
            <person name="Glavina T."/>
            <person name="Hammon N."/>
            <person name="Israni S."/>
            <person name="Pitluck S."/>
            <person name="Bryant D."/>
            <person name="Schmutz J."/>
            <person name="Larimer F."/>
            <person name="Land M."/>
            <person name="Kyrpides N."/>
            <person name="Ivanova N."/>
            <person name="Richardson P."/>
        </authorList>
    </citation>
    <scope>NUCLEOTIDE SEQUENCE [LARGE SCALE GENOMIC DNA]</scope>
    <source>
        <strain>DSM 273 / BCRC 81028 / 2530</strain>
    </source>
</reference>
<keyword id="KW-0963">Cytoplasm</keyword>
<keyword id="KW-0378">Hydrolase</keyword>
<keyword id="KW-0520">NAD</keyword>
<keyword id="KW-0554">One-carbon metabolism</keyword>
<keyword id="KW-1185">Reference proteome</keyword>